<proteinExistence type="inferred from homology"/>
<protein>
    <recommendedName>
        <fullName evidence="1">Putative membrane protein insertion efficiency factor</fullName>
    </recommendedName>
</protein>
<sequence>MRKLALVPIQFYRYAISPLMASHCRFYPSCSCYAYEAIENHGLLRGGWLAVRRLGRCHPWNDGGFDPVPPAPSSRTSSIAE</sequence>
<evidence type="ECO:0000255" key="1">
    <source>
        <dbReference type="HAMAP-Rule" id="MF_00386"/>
    </source>
</evidence>
<evidence type="ECO:0000256" key="2">
    <source>
        <dbReference type="SAM" id="MobiDB-lite"/>
    </source>
</evidence>
<accession>Q1I2H3</accession>
<name>YIDD_PSEE4</name>
<feature type="chain" id="PRO_1000013113" description="Putative membrane protein insertion efficiency factor">
    <location>
        <begin position="1"/>
        <end position="81"/>
    </location>
</feature>
<feature type="region of interest" description="Disordered" evidence="2">
    <location>
        <begin position="61"/>
        <end position="81"/>
    </location>
</feature>
<gene>
    <name type="ordered locus">PSEEN5557</name>
</gene>
<comment type="function">
    <text evidence="1">Could be involved in insertion of integral membrane proteins into the membrane.</text>
</comment>
<comment type="subcellular location">
    <subcellularLocation>
        <location evidence="1">Cell inner membrane</location>
        <topology evidence="1">Peripheral membrane protein</topology>
        <orientation evidence="1">Cytoplasmic side</orientation>
    </subcellularLocation>
</comment>
<comment type="similarity">
    <text evidence="1">Belongs to the UPF0161 family.</text>
</comment>
<keyword id="KW-0997">Cell inner membrane</keyword>
<keyword id="KW-1003">Cell membrane</keyword>
<keyword id="KW-0472">Membrane</keyword>
<reference key="1">
    <citation type="journal article" date="2006" name="Nat. Biotechnol.">
        <title>Complete genome sequence of the entomopathogenic and metabolically versatile soil bacterium Pseudomonas entomophila.</title>
        <authorList>
            <person name="Vodovar N."/>
            <person name="Vallenet D."/>
            <person name="Cruveiller S."/>
            <person name="Rouy Z."/>
            <person name="Barbe V."/>
            <person name="Acosta C."/>
            <person name="Cattolico L."/>
            <person name="Jubin C."/>
            <person name="Lajus A."/>
            <person name="Segurens B."/>
            <person name="Vacherie B."/>
            <person name="Wincker P."/>
            <person name="Weissenbach J."/>
            <person name="Lemaitre B."/>
            <person name="Medigue C."/>
            <person name="Boccard F."/>
        </authorList>
    </citation>
    <scope>NUCLEOTIDE SEQUENCE [LARGE SCALE GENOMIC DNA]</scope>
    <source>
        <strain>L48</strain>
    </source>
</reference>
<organism>
    <name type="scientific">Pseudomonas entomophila (strain L48)</name>
    <dbReference type="NCBI Taxonomy" id="384676"/>
    <lineage>
        <taxon>Bacteria</taxon>
        <taxon>Pseudomonadati</taxon>
        <taxon>Pseudomonadota</taxon>
        <taxon>Gammaproteobacteria</taxon>
        <taxon>Pseudomonadales</taxon>
        <taxon>Pseudomonadaceae</taxon>
        <taxon>Pseudomonas</taxon>
    </lineage>
</organism>
<dbReference type="EMBL" id="CT573326">
    <property type="protein sequence ID" value="CAK18163.1"/>
    <property type="molecule type" value="Genomic_DNA"/>
</dbReference>
<dbReference type="STRING" id="384676.PSEEN5557"/>
<dbReference type="KEGG" id="pen:PSEEN5557"/>
<dbReference type="eggNOG" id="COG0759">
    <property type="taxonomic scope" value="Bacteria"/>
</dbReference>
<dbReference type="HOGENOM" id="CLU_144811_6_1_6"/>
<dbReference type="OrthoDB" id="9801753at2"/>
<dbReference type="Proteomes" id="UP000000658">
    <property type="component" value="Chromosome"/>
</dbReference>
<dbReference type="GO" id="GO:0005886">
    <property type="term" value="C:plasma membrane"/>
    <property type="evidence" value="ECO:0007669"/>
    <property type="project" value="UniProtKB-SubCell"/>
</dbReference>
<dbReference type="HAMAP" id="MF_00386">
    <property type="entry name" value="UPF0161_YidD"/>
    <property type="match status" value="1"/>
</dbReference>
<dbReference type="InterPro" id="IPR002696">
    <property type="entry name" value="Membr_insert_effic_factor_YidD"/>
</dbReference>
<dbReference type="NCBIfam" id="TIGR00278">
    <property type="entry name" value="membrane protein insertion efficiency factor YidD"/>
    <property type="match status" value="1"/>
</dbReference>
<dbReference type="PANTHER" id="PTHR33383">
    <property type="entry name" value="MEMBRANE PROTEIN INSERTION EFFICIENCY FACTOR-RELATED"/>
    <property type="match status" value="1"/>
</dbReference>
<dbReference type="PANTHER" id="PTHR33383:SF1">
    <property type="entry name" value="MEMBRANE PROTEIN INSERTION EFFICIENCY FACTOR-RELATED"/>
    <property type="match status" value="1"/>
</dbReference>
<dbReference type="Pfam" id="PF01809">
    <property type="entry name" value="YidD"/>
    <property type="match status" value="1"/>
</dbReference>
<dbReference type="SMART" id="SM01234">
    <property type="entry name" value="Haemolytic"/>
    <property type="match status" value="1"/>
</dbReference>